<evidence type="ECO:0000250" key="1"/>
<evidence type="ECO:0000250" key="2">
    <source>
        <dbReference type="UniProtKB" id="P08668"/>
    </source>
</evidence>
<evidence type="ECO:0000250" key="3">
    <source>
        <dbReference type="UniProtKB" id="P0DTJ1"/>
    </source>
</evidence>
<evidence type="ECO:0000250" key="4">
    <source>
        <dbReference type="UniProtKB" id="P27312"/>
    </source>
</evidence>
<evidence type="ECO:0000250" key="5">
    <source>
        <dbReference type="UniProtKB" id="P41266"/>
    </source>
</evidence>
<evidence type="ECO:0000250" key="6">
    <source>
        <dbReference type="UniProtKB" id="Q9E006"/>
    </source>
</evidence>
<evidence type="ECO:0000255" key="7"/>
<evidence type="ECO:0000255" key="8">
    <source>
        <dbReference type="PROSITE-ProRule" id="PRU00379"/>
    </source>
</evidence>
<evidence type="ECO:0000305" key="9"/>
<proteinExistence type="inferred from homology"/>
<name>GP_SEOUR</name>
<keyword id="KW-1015">Disulfide bond</keyword>
<keyword id="KW-1170">Fusion of virus membrane with host endosomal membrane</keyword>
<keyword id="KW-1168">Fusion of virus membrane with host membrane</keyword>
<keyword id="KW-0325">Glycoprotein</keyword>
<keyword id="KW-1038">Host endoplasmic reticulum</keyword>
<keyword id="KW-1040">Host Golgi apparatus</keyword>
<keyword id="KW-1043">Host membrane</keyword>
<keyword id="KW-1045">Host mitochondrion</keyword>
<keyword id="KW-0945">Host-virus interaction</keyword>
<keyword id="KW-1090">Inhibition of host innate immune response by virus</keyword>
<keyword id="KW-1113">Inhibition of host RLR pathway by virus</keyword>
<keyword id="KW-1110">Inhibition of host TRAFs by virus</keyword>
<keyword id="KW-0472">Membrane</keyword>
<keyword id="KW-0479">Metal-binding</keyword>
<keyword id="KW-0597">Phosphoprotein</keyword>
<keyword id="KW-0677">Repeat</keyword>
<keyword id="KW-0732">Signal</keyword>
<keyword id="KW-0812">Transmembrane</keyword>
<keyword id="KW-1133">Transmembrane helix</keyword>
<keyword id="KW-1161">Viral attachment to host cell</keyword>
<keyword id="KW-0899">Viral immunoevasion</keyword>
<keyword id="KW-1162">Viral penetration into host cytoplasm</keyword>
<keyword id="KW-0946">Virion</keyword>
<keyword id="KW-1160">Virus entry into host cell</keyword>
<keyword id="KW-0862">Zinc</keyword>
<keyword id="KW-0863">Zinc-finger</keyword>
<protein>
    <recommendedName>
        <fullName>Envelopment polyprotein</fullName>
    </recommendedName>
    <alternativeName>
        <fullName>M polyprotein</fullName>
    </alternativeName>
    <component>
        <recommendedName>
            <fullName evidence="2">Glycoprotein N</fullName>
            <shortName>Gn</shortName>
        </recommendedName>
        <alternativeName>
            <fullName>Glycoprotein G1</fullName>
        </alternativeName>
    </component>
    <component>
        <recommendedName>
            <fullName evidence="2">Glycoprotein C</fullName>
            <shortName>Gc</shortName>
        </recommendedName>
        <alternativeName>
            <fullName>Glycoprotein G2</fullName>
        </alternativeName>
    </component>
</protein>
<reference key="1">
    <citation type="journal article" date="1991" name="Ping Tu Hsueh Pao">
        <title>Molecular cloning and sequencing of the M genome segment of epidemic hemorrhagic fever virus R22 strain.</title>
        <authorList>
            <person name="Shi L.C."/>
            <person name="Hang C.S."/>
            <person name="Li D.X."/>
            <person name="Yuan J.S."/>
            <person name="Jin D.Y."/>
            <person name="Song G."/>
        </authorList>
    </citation>
    <scope>NUCLEOTIDE SEQUENCE [GENOMIC RNA]</scope>
</reference>
<reference key="2">
    <citation type="journal article" date="1991" name="Virus Res.">
        <title>Molecular characterization and expression of glycoprotein gene of Hantavirus R22 strain isolated from Rattus norvegicus in China.</title>
        <authorList>
            <person name="Xu X.A."/>
            <person name="Ruo S.L."/>
            <person name="Tang Y.W."/>
            <person name="Fisher-Hoch S.P."/>
            <person name="McCormick J.B."/>
        </authorList>
    </citation>
    <scope>NUCLEOTIDE SEQUENCE [GENOMIC RNA]</scope>
</reference>
<reference key="3">
    <citation type="journal article" date="2014" name="Viruses">
        <title>Hantavirus Gn and Gc envelope glycoproteins: key structural units for virus cell entry and virus assembly.</title>
        <authorList>
            <person name="Cifuentes-Munoz N."/>
            <person name="Salazar-Quiroz N."/>
            <person name="Tischler N.D."/>
        </authorList>
    </citation>
    <scope>REVIEW</scope>
</reference>
<dbReference type="EMBL" id="S68035">
    <property type="protein sequence ID" value="AAB20470.2"/>
    <property type="molecule type" value="Genomic_RNA"/>
</dbReference>
<dbReference type="PIR" id="A43960">
    <property type="entry name" value="A43960"/>
</dbReference>
<dbReference type="PIR" id="JC1006">
    <property type="entry name" value="GNVU22"/>
</dbReference>
<dbReference type="SMR" id="P28729"/>
<dbReference type="GlyCosmos" id="P28729">
    <property type="glycosylation" value="5 sites, No reported glycans"/>
</dbReference>
<dbReference type="GO" id="GO:0044167">
    <property type="term" value="C:host cell endoplasmic reticulum membrane"/>
    <property type="evidence" value="ECO:0007669"/>
    <property type="project" value="UniProtKB-SubCell"/>
</dbReference>
<dbReference type="GO" id="GO:0044178">
    <property type="term" value="C:host cell Golgi membrane"/>
    <property type="evidence" value="ECO:0007669"/>
    <property type="project" value="UniProtKB-SubCell"/>
</dbReference>
<dbReference type="GO" id="GO:0033650">
    <property type="term" value="C:host cell mitochondrion"/>
    <property type="evidence" value="ECO:0007669"/>
    <property type="project" value="UniProtKB-SubCell"/>
</dbReference>
<dbReference type="GO" id="GO:0044228">
    <property type="term" value="C:host cell surface"/>
    <property type="evidence" value="ECO:0007669"/>
    <property type="project" value="UniProtKB-SubCell"/>
</dbReference>
<dbReference type="GO" id="GO:0016020">
    <property type="term" value="C:membrane"/>
    <property type="evidence" value="ECO:0007669"/>
    <property type="project" value="UniProtKB-KW"/>
</dbReference>
<dbReference type="GO" id="GO:0055036">
    <property type="term" value="C:virion membrane"/>
    <property type="evidence" value="ECO:0007669"/>
    <property type="project" value="UniProtKB-SubCell"/>
</dbReference>
<dbReference type="GO" id="GO:0008270">
    <property type="term" value="F:zinc ion binding"/>
    <property type="evidence" value="ECO:0007669"/>
    <property type="project" value="UniProtKB-KW"/>
</dbReference>
<dbReference type="GO" id="GO:0039654">
    <property type="term" value="P:fusion of virus membrane with host endosome membrane"/>
    <property type="evidence" value="ECO:0007669"/>
    <property type="project" value="UniProtKB-KW"/>
</dbReference>
<dbReference type="GO" id="GO:0007165">
    <property type="term" value="P:signal transduction"/>
    <property type="evidence" value="ECO:0007669"/>
    <property type="project" value="InterPro"/>
</dbReference>
<dbReference type="GO" id="GO:0046718">
    <property type="term" value="P:symbiont entry into host cell"/>
    <property type="evidence" value="ECO:0007669"/>
    <property type="project" value="UniProtKB-KW"/>
</dbReference>
<dbReference type="GO" id="GO:0052170">
    <property type="term" value="P:symbiont-mediated suppression of host innate immune response"/>
    <property type="evidence" value="ECO:0007669"/>
    <property type="project" value="UniProtKB-KW"/>
</dbReference>
<dbReference type="GO" id="GO:0039527">
    <property type="term" value="P:symbiont-mediated suppression of host TRAF-mediated signal transduction"/>
    <property type="evidence" value="ECO:0007669"/>
    <property type="project" value="UniProtKB-KW"/>
</dbReference>
<dbReference type="GO" id="GO:0019062">
    <property type="term" value="P:virion attachment to host cell"/>
    <property type="evidence" value="ECO:0007669"/>
    <property type="project" value="UniProtKB-KW"/>
</dbReference>
<dbReference type="Gene3D" id="1.10.8.1320">
    <property type="match status" value="1"/>
</dbReference>
<dbReference type="InterPro" id="IPR016402">
    <property type="entry name" value="Envelope_glycoprot_Hantavirus"/>
</dbReference>
<dbReference type="InterPro" id="IPR048791">
    <property type="entry name" value="Gc_C_bunya"/>
</dbReference>
<dbReference type="InterPro" id="IPR048790">
    <property type="entry name" value="Gn-B_hanta"/>
</dbReference>
<dbReference type="InterPro" id="IPR002532">
    <property type="entry name" value="Hanta_Gc_N"/>
</dbReference>
<dbReference type="InterPro" id="IPR002534">
    <property type="entry name" value="Hanta_Gn-H"/>
</dbReference>
<dbReference type="InterPro" id="IPR012316">
    <property type="entry name" value="ITAM_motif_hantavir-typ"/>
</dbReference>
<dbReference type="Pfam" id="PF20682">
    <property type="entry name" value="Hanta_Gc_C"/>
    <property type="match status" value="1"/>
</dbReference>
<dbReference type="Pfam" id="PF01561">
    <property type="entry name" value="Hanta_Gc_N"/>
    <property type="match status" value="1"/>
</dbReference>
<dbReference type="Pfam" id="PF20679">
    <property type="entry name" value="Hanta_Gn-B"/>
    <property type="match status" value="1"/>
</dbReference>
<dbReference type="Pfam" id="PF01567">
    <property type="entry name" value="Hanta_Gn-H"/>
    <property type="match status" value="1"/>
</dbReference>
<dbReference type="Pfam" id="PF10538">
    <property type="entry name" value="ITAM_Cys-rich"/>
    <property type="match status" value="1"/>
</dbReference>
<dbReference type="PIRSF" id="PIRSF003945">
    <property type="entry name" value="M_poly_HantaV"/>
    <property type="match status" value="1"/>
</dbReference>
<dbReference type="PROSITE" id="PS51056">
    <property type="entry name" value="ITAM_2"/>
    <property type="match status" value="1"/>
</dbReference>
<sequence>MWSLLLLAALVGQGFALKNVFDMRIQCPHSANFGETSVSGYTELPPLSLQEAEQLVPESSCNMDNHQSLSTINKLTKVVWRKKANQESANQNSFEVVESEVSFKGLCMLKHRMVEESYRNRRSVICYDLACNSTFCKPTVYMIVPKHACNMMKSCLIGLVPYRIQVVYERTYCTTGILTEGKCFVPDKAVVSALKRGMYAIASIETICFFIHQKGNTYKIVTAITSAMGSKCNNTDTKVQGYYICIIGGNSAPVYAPAGEDFRAMEVFSGIITSPHGEDHDLPAEEIATYQISGQIEAKIPHTVSSKNLKLIAFAGIPSYSSTSILAASEDGRFIFSPGLFPNLNQSVCDNNALPLIWRGLIDLTGYYEAVHPCNVFCVLSGPGASCEAFSEGGIFNITSPMCLVSKQNRFRAAEQQISFICQRVDMDIIVYCNGQKKTILTKTLVMASAFILLQVSFHCYQGLPIAIAIELCVPGFHGWATAALLITFCFGWVLIPACTLAILLVLKFFANILHTSNQENRFKAILRKIKEEFEKTKGSMGCEICKYECETLKELKAHNLSCVQGECPYCFTHCEPTETATQAHYKVCQATHRFREDLKKTVTPKKYWARLYRTLNLFRYKSRCYILTMWTLLLIIESILWAASAAEIPLVPLWTDNAHGVGSVPMHRNTYELDFSFPSSSKYTYKRHLTNPVNDQQSVSLHIEIESQGIGADVHHLGHWYDARLNLKTSFHCYGACTKYQYPWHTAKCHFEKDYEYENSWACNPPDCPGVGTGCTACGLYLDQLKPVATPFRIISVRYSRKVCVQFGEEYLCKTIDMNDCFVTRHAKICIIGTVSKFSQGDTLLFLGPMEGGGIIFKHWCTSTCHFGDPGDVMGPKDKPFICPEFPGQFRKKCNFATTPICEYDGNIISGYKKVLATIDSFQSFNTSNIHFTDERIEWRDPDGMLRDHINIVISKDIDFENLAENPCKVGLQAANIEGAWGSGVGFTLTCQVSLTECPTFLTSIKACDMAICYGAESVTLSRGQNTVRITGKGGHSGSSFKCCHGKECSSTGLQASAPHLDKVNGISELENEKVYDDGAPECGVTCWFKKSGEWVMGIINGNWVVLIVLCVLLLFSLILLSILCPVRKHKKS</sequence>
<comment type="function">
    <molecule>Glycoprotein N</molecule>
    <text evidence="2 4">Forms homotetramers with glycoprotein C at the surface of the virion (By similarity). Attaches the virion to host cell receptors including integrin ITGAV/ITGB3 (By similarity). This attachment induces virion internalization predominantly through clathrin-dependent endocytosis (By similarity). Mediates the assembly and budding of infectious virus particles through its interaction with the nucleocapsid protein and the viral genome (By similarity). May dysregulate normal immune and endothelial cell responses through an ITAM motif (By similarity). Translocates to mitochondria, binds to host TUFM and recruits MAP1LC3B (By similarity). These interactions induce mitochondrial autophagy and therefore destruction of host MAVS leading to inhibition of type I interferon (IFN) responses (By similarity). Concomitant breakdown of glycoprotein N is apparently prevented by the nucleoprotein that may inhibit Gn-stimulated autophagosome-lysosome fusion (By similarity). Interacts with the viral genomic RNA (By similarity).</text>
</comment>
<comment type="function">
    <molecule>Glycoprotein C</molecule>
    <text evidence="2">Forms homotetramers with glycoprotein N at the surface of the virion. Attaches the virion to host cell receptors including integrin ITGAV/ITGB3. This attachment induces virion internalization predominantly through clathrin-dependent endocytosis. Class II fusion protein that promotes fusion of viral membrane with host endosomal membrane after endocytosis of the virion.</text>
</comment>
<comment type="subunit">
    <molecule>Glycoprotein N</molecule>
    <text evidence="2 3">Homodimer (By similarity). Homotetramer; forms heterotetrameric Gn-Gc spikes in the pre-fusion conformation (By similarity). Interacts (via C-terminus) with the nucleoprotein (By similarity). Interacts with host TUFM; this interaction contributes to the virus-induced degradation of mitochondria by autophagy, which leads to degradation of host MAVS and inhibition of type I interferon (IFN) responses (By similarity). Interacts with host MAP1LC3B; this interaction contributes to the virus-induced degradation of mitochondria by autophagy, which leads to degradation of host MAVS and inhibition of type I interferon (IFN) responses (By similarity).</text>
</comment>
<comment type="subunit">
    <molecule>Glycoprotein C</molecule>
    <text evidence="2 4">Homodimer. Homotetramer; forms heterotetrameric Gn-Gc spikes in the pre-fusion conformation. Homotrimer; forms homotrimer in the post-fusion conformation at acidic pH (By similarity). Interacts (via C-terminus) with the nucleoprotein (By similarity).</text>
</comment>
<comment type="subcellular location">
    <molecule>Glycoprotein N</molecule>
    <subcellularLocation>
        <location evidence="2">Virion membrane</location>
        <topology>Multi-pass membrane protein</topology>
    </subcellularLocation>
    <subcellularLocation>
        <location evidence="2">Host cell surface</location>
    </subcellularLocation>
    <subcellularLocation>
        <location evidence="2">Host Golgi apparatus membrane</location>
        <topology evidence="2">Multi-pass membrane protein</topology>
    </subcellularLocation>
    <subcellularLocation>
        <location evidence="2">Host endoplasmic reticulum membrane</location>
        <topology evidence="2">Multi-pass membrane protein</topology>
    </subcellularLocation>
    <subcellularLocation>
        <location evidence="2">Host mitochondrion</location>
    </subcellularLocation>
    <text evidence="4">Interaction between glycoprotein N and glycoprotein C is essential for proper targeting of glycoprotein N to the host Golgi complex, where virion budding occurs.</text>
</comment>
<comment type="subcellular location">
    <molecule>Glycoprotein C</molecule>
    <subcellularLocation>
        <location evidence="2">Virion membrane</location>
        <topology>Single-pass type I membrane protein</topology>
    </subcellularLocation>
    <subcellularLocation>
        <location evidence="2">Host cell surface</location>
    </subcellularLocation>
    <subcellularLocation>
        <location evidence="2">Host Golgi apparatus membrane</location>
        <topology evidence="2">Single-pass type I membrane protein</topology>
    </subcellularLocation>
    <subcellularLocation>
        <location evidence="2">Host endoplasmic reticulum membrane</location>
        <topology evidence="2">Single-pass type I membrane protein</topology>
    </subcellularLocation>
    <text evidence="2 9">Budding probably takes place at the host Golgi (Probable). Glycoprotein C cytoplasmic tail is important for efficient Golgi localization (By similarity).</text>
</comment>
<comment type="domain">
    <molecule>Glycoprotein N</molecule>
    <text evidence="2 3 4 6">The YxxL motif at the C-terminus is indispensable for the interaction with MAP1LC3B and for the Gn-mediated induction of mitochondrial autophagy (By similarity). The cytoplasmic tail is involved in the inhibition of the host innate immune response (By similarity). The C-terminus of the cytoplasmic tail is involved in binding to the viral genome and the nucleocapsid (By similarity). Contains 2 contiguous zinc-fingers (By similarity).</text>
</comment>
<comment type="domain">
    <molecule>Glycoprotein C</molecule>
    <text evidence="4">The C-terminus is necessary for proper localization in the Golgi (By similarity). The cytoplasmic tail is involved in binding to the nucleocapsid (By similarity).</text>
</comment>
<comment type="PTM">
    <molecule>Envelopment polyprotein</molecule>
    <text evidence="2">Envelope polyprotein precursor is quickly cleaved in vivo just after synthesis, presumably by host signal peptidase.</text>
</comment>
<comment type="similarity">
    <text evidence="9">Belongs to the hantavirus envelope glycoprotein family.</text>
</comment>
<accession>P28729</accession>
<organismHost>
    <name type="scientific">Homo sapiens</name>
    <name type="common">Human</name>
    <dbReference type="NCBI Taxonomy" id="9606"/>
</organismHost>
<organismHost>
    <name type="scientific">Rattus norvegicus</name>
    <name type="common">Rat</name>
    <dbReference type="NCBI Taxonomy" id="10116"/>
</organismHost>
<organismHost>
    <name type="scientific">Rattus rattus</name>
    <name type="common">Black rat</name>
    <dbReference type="NCBI Taxonomy" id="10117"/>
</organismHost>
<feature type="signal peptide" evidence="7">
    <location>
        <begin position="1"/>
        <end position="16"/>
    </location>
</feature>
<feature type="chain" id="PRO_0000036835" description="Envelopment polyprotein">
    <location>
        <begin position="17"/>
        <end position="1134"/>
    </location>
</feature>
<feature type="chain" id="PRO_0000036836" description="Glycoprotein N" evidence="1">
    <location>
        <begin position="17"/>
        <end position="646"/>
    </location>
</feature>
<feature type="chain" id="PRO_0000036837" description="Glycoprotein C" evidence="1">
    <location>
        <begin position="647"/>
        <end position="1134"/>
    </location>
</feature>
<feature type="topological domain" description="Lumenal" evidence="7">
    <location>
        <begin position="17"/>
        <end position="484"/>
    </location>
</feature>
<feature type="transmembrane region" description="Helical" evidence="7">
    <location>
        <begin position="485"/>
        <end position="504"/>
    </location>
</feature>
<feature type="topological domain" description="Cytoplasmic" evidence="7">
    <location>
        <begin position="505"/>
        <end position="626"/>
    </location>
</feature>
<feature type="transmembrane region" description="Helical" evidence="7">
    <location>
        <begin position="627"/>
        <end position="647"/>
    </location>
</feature>
<feature type="topological domain" description="Lumenal" evidence="7">
    <location>
        <begin position="648"/>
        <end position="1105"/>
    </location>
</feature>
<feature type="transmembrane region" description="Helical" evidence="7">
    <location>
        <begin position="1106"/>
        <end position="1125"/>
    </location>
</feature>
<feature type="topological domain" description="Cytoplasmic" evidence="7">
    <location>
        <begin position="1126"/>
        <end position="1134"/>
    </location>
</feature>
<feature type="domain" description="ITAM" evidence="8">
    <location>
        <begin position="609"/>
        <end position="632"/>
    </location>
</feature>
<feature type="zinc finger region" description="CCHC-type 1" evidence="6">
    <location>
        <begin position="543"/>
        <end position="563"/>
    </location>
</feature>
<feature type="zinc finger region" description="CCHC-type 2" evidence="6">
    <location>
        <begin position="568"/>
        <end position="589"/>
    </location>
</feature>
<feature type="region of interest" description="Binding to the ribonucleoprotein" evidence="6">
    <location>
        <begin position="514"/>
        <end position="531"/>
    </location>
</feature>
<feature type="region of interest" description="Binding to the ribonucleoprotein" evidence="4">
    <location>
        <begin position="586"/>
        <end position="603"/>
    </location>
</feature>
<feature type="region of interest" description="Binding to the ribonucleoprotein" evidence="6">
    <location>
        <begin position="590"/>
        <end position="601"/>
    </location>
</feature>
<feature type="region of interest" description="Binding to the ribonucleoprotein" evidence="4">
    <location>
        <begin position="609"/>
        <end position="623"/>
    </location>
</feature>
<feature type="region of interest" description="Fusion loop" evidence="5">
    <location>
        <begin position="756"/>
        <end position="776"/>
    </location>
</feature>
<feature type="region of interest" description="Binding to the ribonucleoprotein" evidence="4">
    <location>
        <begin position="1121"/>
        <end position="1134"/>
    </location>
</feature>
<feature type="short sequence motif" description="YxxL" evidence="2">
    <location>
        <begin position="613"/>
        <end position="616"/>
    </location>
</feature>
<feature type="site" description="Cleavage; by host signal peptidase" evidence="2">
    <location>
        <begin position="646"/>
        <end position="647"/>
    </location>
</feature>
<feature type="glycosylation site" description="N-linked (GlcNAc...) asparagine; by host" evidence="7">
    <location>
        <position position="132"/>
    </location>
</feature>
<feature type="glycosylation site" description="N-linked (GlcNAc...) asparagine; by host" evidence="7">
    <location>
        <position position="233"/>
    </location>
</feature>
<feature type="glycosylation site" description="N-linked (GlcNAc...) asparagine; by host" evidence="7">
    <location>
        <position position="345"/>
    </location>
</feature>
<feature type="glycosylation site" description="N-linked (GlcNAc...) asparagine; by host" evidence="7">
    <location>
        <position position="397"/>
    </location>
</feature>
<feature type="glycosylation site" description="N-linked (GlcNAc...) asparagine; by host" evidence="2">
    <location>
        <position position="927"/>
    </location>
</feature>
<feature type="disulfide bond" evidence="6">
    <location>
        <begin position="27"/>
        <end position="149"/>
    </location>
</feature>
<feature type="disulfide bond" evidence="6">
    <location>
        <begin position="61"/>
        <end position="155"/>
    </location>
</feature>
<feature type="disulfide bond" evidence="6">
    <location>
        <begin position="107"/>
        <end position="126"/>
    </location>
</feature>
<feature type="disulfide bond" evidence="6">
    <location>
        <begin position="131"/>
        <end position="136"/>
    </location>
</feature>
<feature type="disulfide bond" evidence="6">
    <location>
        <begin position="173"/>
        <end position="183"/>
    </location>
</feature>
<feature type="disulfide bond" evidence="6">
    <location>
        <begin position="208"/>
        <end position="245"/>
    </location>
</feature>
<feature type="disulfide bond" evidence="6">
    <location>
        <begin position="232"/>
        <end position="349"/>
    </location>
</feature>
<feature type="disulfide bond" evidence="6">
    <location>
        <begin position="374"/>
        <end position="433"/>
    </location>
</feature>
<feature type="disulfide bond" evidence="6">
    <location>
        <begin position="378"/>
        <end position="387"/>
    </location>
</feature>
<feature type="disulfide bond" evidence="6">
    <location>
        <begin position="403"/>
        <end position="422"/>
    </location>
</feature>
<feature type="disulfide bond" evidence="2">
    <location>
        <begin position="734"/>
        <end position="769"/>
    </location>
</feature>
<feature type="disulfide bond" evidence="2">
    <location>
        <begin position="738"/>
        <end position="776"/>
    </location>
</feature>
<feature type="disulfide bond" evidence="2">
    <location>
        <begin position="750"/>
        <end position="884"/>
    </location>
</feature>
<feature type="disulfide bond" evidence="2">
    <location>
        <begin position="764"/>
        <end position="895"/>
    </location>
</feature>
<feature type="disulfide bond" evidence="2">
    <location>
        <begin position="779"/>
        <end position="903"/>
    </location>
</feature>
<feature type="disulfide bond" evidence="2">
    <location>
        <begin position="805"/>
        <end position="814"/>
    </location>
</feature>
<feature type="disulfide bond" evidence="2">
    <location>
        <begin position="822"/>
        <end position="831"/>
    </location>
</feature>
<feature type="disulfide bond" evidence="2">
    <location>
        <begin position="862"/>
        <end position="866"/>
    </location>
</feature>
<feature type="disulfide bond" evidence="2">
    <location>
        <begin position="969"/>
        <end position="999"/>
    </location>
</feature>
<feature type="disulfide bond" evidence="2">
    <location>
        <begin position="992"/>
        <end position="1044"/>
    </location>
</feature>
<feature type="disulfide bond" evidence="2">
    <location>
        <begin position="1009"/>
        <end position="1014"/>
    </location>
</feature>
<feature type="disulfide bond" evidence="2">
    <location>
        <begin position="1045"/>
        <end position="1050"/>
    </location>
</feature>
<feature type="disulfide bond" evidence="6">
    <location>
        <begin position="1084"/>
        <end position="1088"/>
    </location>
</feature>
<feature type="sequence conflict" description="In Ref. 2; AAB20470." evidence="9" ref="2">
    <original>EEI</original>
    <variation>KKF</variation>
    <location>
        <begin position="285"/>
        <end position="287"/>
    </location>
</feature>
<feature type="sequence conflict" description="In Ref. 2; AAB20470." evidence="9" ref="2">
    <original>S</original>
    <variation>T</variation>
    <location>
        <position position="645"/>
    </location>
</feature>
<feature type="sequence conflict" description="In Ref. 2; AAB20470." evidence="9" ref="2">
    <original>V</original>
    <variation>D</variation>
    <location>
        <position position="874"/>
    </location>
</feature>
<gene>
    <name type="primary">GP</name>
</gene>
<organism>
    <name type="scientific">Seoul virus (strain R22)</name>
    <dbReference type="NCBI Taxonomy" id="31620"/>
    <lineage>
        <taxon>Viruses</taxon>
        <taxon>Riboviria</taxon>
        <taxon>Orthornavirae</taxon>
        <taxon>Negarnaviricota</taxon>
        <taxon>Polyploviricotina</taxon>
        <taxon>Ellioviricetes</taxon>
        <taxon>Bunyavirales</taxon>
        <taxon>Hantaviridae</taxon>
        <taxon>Mammantavirinae</taxon>
        <taxon>Orthohantavirus</taxon>
        <taxon>Orthohantavirus seoulense</taxon>
    </lineage>
</organism>